<proteinExistence type="inferred from homology"/>
<organism>
    <name type="scientific">Escherichia coli O17:K52:H18 (strain UMN026 / ExPEC)</name>
    <dbReference type="NCBI Taxonomy" id="585056"/>
    <lineage>
        <taxon>Bacteria</taxon>
        <taxon>Pseudomonadati</taxon>
        <taxon>Pseudomonadota</taxon>
        <taxon>Gammaproteobacteria</taxon>
        <taxon>Enterobacterales</taxon>
        <taxon>Enterobacteriaceae</taxon>
        <taxon>Escherichia</taxon>
    </lineage>
</organism>
<evidence type="ECO:0000255" key="1">
    <source>
        <dbReference type="HAMAP-Rule" id="MF_00361"/>
    </source>
</evidence>
<gene>
    <name evidence="1" type="primary">nadK</name>
    <name type="ordered locus">ECUMN_2939</name>
</gene>
<keyword id="KW-0067">ATP-binding</keyword>
<keyword id="KW-0963">Cytoplasm</keyword>
<keyword id="KW-0418">Kinase</keyword>
<keyword id="KW-0520">NAD</keyword>
<keyword id="KW-0521">NADP</keyword>
<keyword id="KW-0547">Nucleotide-binding</keyword>
<keyword id="KW-0808">Transferase</keyword>
<name>NADK_ECOLU</name>
<sequence>MNNHFKCIGIVGHPRHPTALTTHEMLYRWLCTKGYEVIVEQQIAHELQLKNVKTGTLAEIGQLADLAVVVGGDGNMLGAARTLARYDIKVIGINRGNLGFLTDLDPDNAQQQLADVLEGHYISEKRFLLEAQVCQQDCQKRISTAINEVVLHPGKVAHMIEFEVYIDEIFAFSQRSDGLIISTPTGSTAYSLSAGGPILTPSLDAITLVPMFPHTLSARPLVINSSSTIRLRFSHRRNDLEISCDSQIALPIQEGEDVLIRRCDYHLNLIHPKDYSYFNTLSTKLGWSKKLF</sequence>
<protein>
    <recommendedName>
        <fullName evidence="1">NAD kinase</fullName>
        <ecNumber evidence="1">2.7.1.23</ecNumber>
    </recommendedName>
    <alternativeName>
        <fullName evidence="1">ATP-dependent NAD kinase</fullName>
    </alternativeName>
</protein>
<reference key="1">
    <citation type="journal article" date="2009" name="PLoS Genet.">
        <title>Organised genome dynamics in the Escherichia coli species results in highly diverse adaptive paths.</title>
        <authorList>
            <person name="Touchon M."/>
            <person name="Hoede C."/>
            <person name="Tenaillon O."/>
            <person name="Barbe V."/>
            <person name="Baeriswyl S."/>
            <person name="Bidet P."/>
            <person name="Bingen E."/>
            <person name="Bonacorsi S."/>
            <person name="Bouchier C."/>
            <person name="Bouvet O."/>
            <person name="Calteau A."/>
            <person name="Chiapello H."/>
            <person name="Clermont O."/>
            <person name="Cruveiller S."/>
            <person name="Danchin A."/>
            <person name="Diard M."/>
            <person name="Dossat C."/>
            <person name="Karoui M.E."/>
            <person name="Frapy E."/>
            <person name="Garry L."/>
            <person name="Ghigo J.M."/>
            <person name="Gilles A.M."/>
            <person name="Johnson J."/>
            <person name="Le Bouguenec C."/>
            <person name="Lescat M."/>
            <person name="Mangenot S."/>
            <person name="Martinez-Jehanne V."/>
            <person name="Matic I."/>
            <person name="Nassif X."/>
            <person name="Oztas S."/>
            <person name="Petit M.A."/>
            <person name="Pichon C."/>
            <person name="Rouy Z."/>
            <person name="Ruf C.S."/>
            <person name="Schneider D."/>
            <person name="Tourret J."/>
            <person name="Vacherie B."/>
            <person name="Vallenet D."/>
            <person name="Medigue C."/>
            <person name="Rocha E.P.C."/>
            <person name="Denamur E."/>
        </authorList>
    </citation>
    <scope>NUCLEOTIDE SEQUENCE [LARGE SCALE GENOMIC DNA]</scope>
    <source>
        <strain>UMN026 / ExPEC</strain>
    </source>
</reference>
<dbReference type="EC" id="2.7.1.23" evidence="1"/>
<dbReference type="EMBL" id="CU928163">
    <property type="protein sequence ID" value="CAR14110.1"/>
    <property type="molecule type" value="Genomic_DNA"/>
</dbReference>
<dbReference type="RefSeq" id="WP_001059169.1">
    <property type="nucleotide sequence ID" value="NC_011751.1"/>
</dbReference>
<dbReference type="RefSeq" id="YP_002413634.1">
    <property type="nucleotide sequence ID" value="NC_011751.1"/>
</dbReference>
<dbReference type="SMR" id="B7N6K0"/>
<dbReference type="STRING" id="585056.ECUMN_2939"/>
<dbReference type="GeneID" id="93774464"/>
<dbReference type="KEGG" id="eum:ECUMN_2939"/>
<dbReference type="PATRIC" id="fig|585056.7.peg.3121"/>
<dbReference type="HOGENOM" id="CLU_008831_0_1_6"/>
<dbReference type="Proteomes" id="UP000007097">
    <property type="component" value="Chromosome"/>
</dbReference>
<dbReference type="GO" id="GO:0005737">
    <property type="term" value="C:cytoplasm"/>
    <property type="evidence" value="ECO:0007669"/>
    <property type="project" value="UniProtKB-SubCell"/>
</dbReference>
<dbReference type="GO" id="GO:0005524">
    <property type="term" value="F:ATP binding"/>
    <property type="evidence" value="ECO:0007669"/>
    <property type="project" value="UniProtKB-KW"/>
</dbReference>
<dbReference type="GO" id="GO:0046872">
    <property type="term" value="F:metal ion binding"/>
    <property type="evidence" value="ECO:0007669"/>
    <property type="project" value="UniProtKB-UniRule"/>
</dbReference>
<dbReference type="GO" id="GO:0051287">
    <property type="term" value="F:NAD binding"/>
    <property type="evidence" value="ECO:0007669"/>
    <property type="project" value="UniProtKB-ARBA"/>
</dbReference>
<dbReference type="GO" id="GO:0003951">
    <property type="term" value="F:NAD+ kinase activity"/>
    <property type="evidence" value="ECO:0007669"/>
    <property type="project" value="UniProtKB-UniRule"/>
</dbReference>
<dbReference type="GO" id="GO:0019674">
    <property type="term" value="P:NAD metabolic process"/>
    <property type="evidence" value="ECO:0007669"/>
    <property type="project" value="InterPro"/>
</dbReference>
<dbReference type="GO" id="GO:0006741">
    <property type="term" value="P:NADP biosynthetic process"/>
    <property type="evidence" value="ECO:0007669"/>
    <property type="project" value="UniProtKB-UniRule"/>
</dbReference>
<dbReference type="FunFam" id="2.60.200.30:FF:000001">
    <property type="entry name" value="NAD kinase"/>
    <property type="match status" value="1"/>
</dbReference>
<dbReference type="FunFam" id="3.40.50.10330:FF:000004">
    <property type="entry name" value="NAD kinase"/>
    <property type="match status" value="1"/>
</dbReference>
<dbReference type="Gene3D" id="3.40.50.10330">
    <property type="entry name" value="Probable inorganic polyphosphate/atp-NAD kinase, domain 1"/>
    <property type="match status" value="1"/>
</dbReference>
<dbReference type="Gene3D" id="2.60.200.30">
    <property type="entry name" value="Probable inorganic polyphosphate/atp-NAD kinase, domain 2"/>
    <property type="match status" value="1"/>
</dbReference>
<dbReference type="HAMAP" id="MF_00361">
    <property type="entry name" value="NAD_kinase"/>
    <property type="match status" value="1"/>
</dbReference>
<dbReference type="InterPro" id="IPR017438">
    <property type="entry name" value="ATP-NAD_kinase_N"/>
</dbReference>
<dbReference type="InterPro" id="IPR017437">
    <property type="entry name" value="ATP-NAD_kinase_PpnK-typ_C"/>
</dbReference>
<dbReference type="InterPro" id="IPR016064">
    <property type="entry name" value="NAD/diacylglycerol_kinase_sf"/>
</dbReference>
<dbReference type="InterPro" id="IPR002504">
    <property type="entry name" value="NADK"/>
</dbReference>
<dbReference type="NCBIfam" id="NF002306">
    <property type="entry name" value="PRK01231.1"/>
    <property type="match status" value="1"/>
</dbReference>
<dbReference type="NCBIfam" id="NF002893">
    <property type="entry name" value="PRK03378.1"/>
    <property type="match status" value="1"/>
</dbReference>
<dbReference type="PANTHER" id="PTHR20275">
    <property type="entry name" value="NAD KINASE"/>
    <property type="match status" value="1"/>
</dbReference>
<dbReference type="PANTHER" id="PTHR20275:SF0">
    <property type="entry name" value="NAD KINASE"/>
    <property type="match status" value="1"/>
</dbReference>
<dbReference type="Pfam" id="PF01513">
    <property type="entry name" value="NAD_kinase"/>
    <property type="match status" value="1"/>
</dbReference>
<dbReference type="Pfam" id="PF20143">
    <property type="entry name" value="NAD_kinase_C"/>
    <property type="match status" value="1"/>
</dbReference>
<dbReference type="SUPFAM" id="SSF111331">
    <property type="entry name" value="NAD kinase/diacylglycerol kinase-like"/>
    <property type="match status" value="1"/>
</dbReference>
<comment type="function">
    <text evidence="1">Involved in the regulation of the intracellular balance of NAD and NADP, and is a key enzyme in the biosynthesis of NADP. Catalyzes specifically the phosphorylation on 2'-hydroxyl of the adenosine moiety of NAD to yield NADP.</text>
</comment>
<comment type="catalytic activity">
    <reaction evidence="1">
        <text>NAD(+) + ATP = ADP + NADP(+) + H(+)</text>
        <dbReference type="Rhea" id="RHEA:18629"/>
        <dbReference type="ChEBI" id="CHEBI:15378"/>
        <dbReference type="ChEBI" id="CHEBI:30616"/>
        <dbReference type="ChEBI" id="CHEBI:57540"/>
        <dbReference type="ChEBI" id="CHEBI:58349"/>
        <dbReference type="ChEBI" id="CHEBI:456216"/>
        <dbReference type="EC" id="2.7.1.23"/>
    </reaction>
</comment>
<comment type="cofactor">
    <cofactor evidence="1">
        <name>a divalent metal cation</name>
        <dbReference type="ChEBI" id="CHEBI:60240"/>
    </cofactor>
</comment>
<comment type="subcellular location">
    <subcellularLocation>
        <location evidence="1">Cytoplasm</location>
    </subcellularLocation>
</comment>
<comment type="similarity">
    <text evidence="1">Belongs to the NAD kinase family.</text>
</comment>
<feature type="chain" id="PRO_1000120857" description="NAD kinase">
    <location>
        <begin position="1"/>
        <end position="292"/>
    </location>
</feature>
<feature type="active site" description="Proton acceptor" evidence="1">
    <location>
        <position position="73"/>
    </location>
</feature>
<feature type="binding site" evidence="1">
    <location>
        <begin position="73"/>
        <end position="74"/>
    </location>
    <ligand>
        <name>NAD(+)</name>
        <dbReference type="ChEBI" id="CHEBI:57540"/>
    </ligand>
</feature>
<feature type="binding site" evidence="1">
    <location>
        <begin position="147"/>
        <end position="148"/>
    </location>
    <ligand>
        <name>NAD(+)</name>
        <dbReference type="ChEBI" id="CHEBI:57540"/>
    </ligand>
</feature>
<feature type="binding site" evidence="1">
    <location>
        <position position="158"/>
    </location>
    <ligand>
        <name>NAD(+)</name>
        <dbReference type="ChEBI" id="CHEBI:57540"/>
    </ligand>
</feature>
<feature type="binding site" evidence="1">
    <location>
        <position position="175"/>
    </location>
    <ligand>
        <name>NAD(+)</name>
        <dbReference type="ChEBI" id="CHEBI:57540"/>
    </ligand>
</feature>
<feature type="binding site" evidence="1">
    <location>
        <position position="177"/>
    </location>
    <ligand>
        <name>NAD(+)</name>
        <dbReference type="ChEBI" id="CHEBI:57540"/>
    </ligand>
</feature>
<feature type="binding site" evidence="1">
    <location>
        <begin position="188"/>
        <end position="193"/>
    </location>
    <ligand>
        <name>NAD(+)</name>
        <dbReference type="ChEBI" id="CHEBI:57540"/>
    </ligand>
</feature>
<feature type="binding site" evidence="1">
    <location>
        <position position="247"/>
    </location>
    <ligand>
        <name>NAD(+)</name>
        <dbReference type="ChEBI" id="CHEBI:57540"/>
    </ligand>
</feature>
<accession>B7N6K0</accession>